<feature type="chain" id="PRO_1000124341" description="GTPase Der">
    <location>
        <begin position="1"/>
        <end position="436"/>
    </location>
</feature>
<feature type="domain" description="EngA-type G 1">
    <location>
        <begin position="4"/>
        <end position="167"/>
    </location>
</feature>
<feature type="domain" description="EngA-type G 2">
    <location>
        <begin position="176"/>
        <end position="351"/>
    </location>
</feature>
<feature type="domain" description="KH-like" evidence="1">
    <location>
        <begin position="352"/>
        <end position="436"/>
    </location>
</feature>
<feature type="binding site" evidence="1">
    <location>
        <begin position="10"/>
        <end position="17"/>
    </location>
    <ligand>
        <name>GTP</name>
        <dbReference type="ChEBI" id="CHEBI:37565"/>
        <label>1</label>
    </ligand>
</feature>
<feature type="binding site" evidence="1">
    <location>
        <begin position="57"/>
        <end position="61"/>
    </location>
    <ligand>
        <name>GTP</name>
        <dbReference type="ChEBI" id="CHEBI:37565"/>
        <label>1</label>
    </ligand>
</feature>
<feature type="binding site" evidence="1">
    <location>
        <begin position="119"/>
        <end position="122"/>
    </location>
    <ligand>
        <name>GTP</name>
        <dbReference type="ChEBI" id="CHEBI:37565"/>
        <label>1</label>
    </ligand>
</feature>
<feature type="binding site" evidence="1">
    <location>
        <begin position="182"/>
        <end position="189"/>
    </location>
    <ligand>
        <name>GTP</name>
        <dbReference type="ChEBI" id="CHEBI:37565"/>
        <label>2</label>
    </ligand>
</feature>
<feature type="binding site" evidence="1">
    <location>
        <begin position="229"/>
        <end position="233"/>
    </location>
    <ligand>
        <name>GTP</name>
        <dbReference type="ChEBI" id="CHEBI:37565"/>
        <label>2</label>
    </ligand>
</feature>
<feature type="binding site" evidence="1">
    <location>
        <begin position="294"/>
        <end position="297"/>
    </location>
    <ligand>
        <name>GTP</name>
        <dbReference type="ChEBI" id="CHEBI:37565"/>
        <label>2</label>
    </ligand>
</feature>
<organism>
    <name type="scientific">Bacillus cereus (strain 03BB102)</name>
    <dbReference type="NCBI Taxonomy" id="572264"/>
    <lineage>
        <taxon>Bacteria</taxon>
        <taxon>Bacillati</taxon>
        <taxon>Bacillota</taxon>
        <taxon>Bacilli</taxon>
        <taxon>Bacillales</taxon>
        <taxon>Bacillaceae</taxon>
        <taxon>Bacillus</taxon>
        <taxon>Bacillus cereus group</taxon>
    </lineage>
</organism>
<dbReference type="EMBL" id="CP001407">
    <property type="protein sequence ID" value="ACO28532.1"/>
    <property type="molecule type" value="Genomic_DNA"/>
</dbReference>
<dbReference type="RefSeq" id="WP_001125893.1">
    <property type="nucleotide sequence ID" value="NZ_CP009318.1"/>
</dbReference>
<dbReference type="SMR" id="C1EN01"/>
<dbReference type="GeneID" id="93009536"/>
<dbReference type="KEGG" id="bcx:BCA_1563"/>
<dbReference type="PATRIC" id="fig|572264.18.peg.1511"/>
<dbReference type="Proteomes" id="UP000002210">
    <property type="component" value="Chromosome"/>
</dbReference>
<dbReference type="GO" id="GO:0005525">
    <property type="term" value="F:GTP binding"/>
    <property type="evidence" value="ECO:0007669"/>
    <property type="project" value="UniProtKB-UniRule"/>
</dbReference>
<dbReference type="GO" id="GO:0043022">
    <property type="term" value="F:ribosome binding"/>
    <property type="evidence" value="ECO:0007669"/>
    <property type="project" value="TreeGrafter"/>
</dbReference>
<dbReference type="GO" id="GO:0042254">
    <property type="term" value="P:ribosome biogenesis"/>
    <property type="evidence" value="ECO:0007669"/>
    <property type="project" value="UniProtKB-KW"/>
</dbReference>
<dbReference type="CDD" id="cd01894">
    <property type="entry name" value="EngA1"/>
    <property type="match status" value="1"/>
</dbReference>
<dbReference type="CDD" id="cd01895">
    <property type="entry name" value="EngA2"/>
    <property type="match status" value="1"/>
</dbReference>
<dbReference type="FunFam" id="3.30.300.20:FF:000004">
    <property type="entry name" value="GTPase Der"/>
    <property type="match status" value="1"/>
</dbReference>
<dbReference type="FunFam" id="3.40.50.300:FF:000040">
    <property type="entry name" value="GTPase Der"/>
    <property type="match status" value="1"/>
</dbReference>
<dbReference type="FunFam" id="3.40.50.300:FF:000057">
    <property type="entry name" value="GTPase Der"/>
    <property type="match status" value="1"/>
</dbReference>
<dbReference type="Gene3D" id="3.30.300.20">
    <property type="match status" value="1"/>
</dbReference>
<dbReference type="Gene3D" id="3.40.50.300">
    <property type="entry name" value="P-loop containing nucleotide triphosphate hydrolases"/>
    <property type="match status" value="2"/>
</dbReference>
<dbReference type="HAMAP" id="MF_00195">
    <property type="entry name" value="GTPase_Der"/>
    <property type="match status" value="1"/>
</dbReference>
<dbReference type="InterPro" id="IPR031166">
    <property type="entry name" value="G_ENGA"/>
</dbReference>
<dbReference type="InterPro" id="IPR006073">
    <property type="entry name" value="GTP-bd"/>
</dbReference>
<dbReference type="InterPro" id="IPR016484">
    <property type="entry name" value="GTPase_Der"/>
</dbReference>
<dbReference type="InterPro" id="IPR032859">
    <property type="entry name" value="KH_dom-like"/>
</dbReference>
<dbReference type="InterPro" id="IPR015946">
    <property type="entry name" value="KH_dom-like_a/b"/>
</dbReference>
<dbReference type="InterPro" id="IPR027417">
    <property type="entry name" value="P-loop_NTPase"/>
</dbReference>
<dbReference type="InterPro" id="IPR005225">
    <property type="entry name" value="Small_GTP-bd"/>
</dbReference>
<dbReference type="NCBIfam" id="TIGR03594">
    <property type="entry name" value="GTPase_EngA"/>
    <property type="match status" value="1"/>
</dbReference>
<dbReference type="NCBIfam" id="TIGR00231">
    <property type="entry name" value="small_GTP"/>
    <property type="match status" value="2"/>
</dbReference>
<dbReference type="PANTHER" id="PTHR43834">
    <property type="entry name" value="GTPASE DER"/>
    <property type="match status" value="1"/>
</dbReference>
<dbReference type="PANTHER" id="PTHR43834:SF6">
    <property type="entry name" value="GTPASE DER"/>
    <property type="match status" value="1"/>
</dbReference>
<dbReference type="Pfam" id="PF14714">
    <property type="entry name" value="KH_dom-like"/>
    <property type="match status" value="1"/>
</dbReference>
<dbReference type="Pfam" id="PF01926">
    <property type="entry name" value="MMR_HSR1"/>
    <property type="match status" value="2"/>
</dbReference>
<dbReference type="PIRSF" id="PIRSF006485">
    <property type="entry name" value="GTP-binding_EngA"/>
    <property type="match status" value="1"/>
</dbReference>
<dbReference type="PRINTS" id="PR00326">
    <property type="entry name" value="GTP1OBG"/>
</dbReference>
<dbReference type="SUPFAM" id="SSF52540">
    <property type="entry name" value="P-loop containing nucleoside triphosphate hydrolases"/>
    <property type="match status" value="2"/>
</dbReference>
<dbReference type="PROSITE" id="PS51712">
    <property type="entry name" value="G_ENGA"/>
    <property type="match status" value="2"/>
</dbReference>
<proteinExistence type="inferred from homology"/>
<sequence length="436" mass="48618">MPKPVIAIVGRPNVGKSTIFNRIVGERVSIVEDIPGVTRDRIYSAGEWLNHEFNIIDTGGIDIGDEPFLTQIRQQAEVAIDEADVIIFMTNGRDGVTAADEEVAKILYRSNKPVVLAVNKVDNPEMRSDIYDFYALGFGEPFPISGTHGLGLGDLLDEAAQHFPKIEEDGYDEDTIRFSLIGRPNVGKSSLVNALLGQERVIVSNVAGTTRDAVDTPYSKDGKDYVIIDTAGMRKKGKVYESTEKYSVLRALRAIERSDVVLVVLDGEEGIIEQDKKIAGYAHDSGRAVVIVVNKWDAVKKDEKTMKAFEENIRAHFQFLEYAPIVFLSAKTRKRTQTLIPVIDEVNESHSIRIQTNVLNDVIMDAVAMNPTPTHNGSRLKIFYATQVAVKPPTFVVFVNDPELLHFSYERFLKNRLRESFGFVGTPIHIIARARD</sequence>
<name>DER_BACC3</name>
<comment type="function">
    <text evidence="1">GTPase that plays an essential role in the late steps of ribosome biogenesis.</text>
</comment>
<comment type="subunit">
    <text evidence="1">Associates with the 50S ribosomal subunit.</text>
</comment>
<comment type="similarity">
    <text evidence="1">Belongs to the TRAFAC class TrmE-Era-EngA-EngB-Septin-like GTPase superfamily. EngA (Der) GTPase family.</text>
</comment>
<accession>C1EN01</accession>
<protein>
    <recommendedName>
        <fullName evidence="1">GTPase Der</fullName>
    </recommendedName>
    <alternativeName>
        <fullName evidence="1">GTP-binding protein EngA</fullName>
    </alternativeName>
</protein>
<keyword id="KW-0342">GTP-binding</keyword>
<keyword id="KW-0547">Nucleotide-binding</keyword>
<keyword id="KW-0677">Repeat</keyword>
<keyword id="KW-0690">Ribosome biogenesis</keyword>
<gene>
    <name evidence="1" type="primary">der</name>
    <name type="synonym">engA</name>
    <name type="ordered locus">BCA_1563</name>
</gene>
<evidence type="ECO:0000255" key="1">
    <source>
        <dbReference type="HAMAP-Rule" id="MF_00195"/>
    </source>
</evidence>
<reference key="1">
    <citation type="submission" date="2009-02" db="EMBL/GenBank/DDBJ databases">
        <title>Genome sequence of Bacillus cereus 03BB102.</title>
        <authorList>
            <person name="Dodson R.J."/>
            <person name="Jackson P."/>
            <person name="Munk A.C."/>
            <person name="Brettin T."/>
            <person name="Bruce D."/>
            <person name="Detter C."/>
            <person name="Tapia R."/>
            <person name="Han C."/>
            <person name="Sutton G."/>
            <person name="Sims D."/>
        </authorList>
    </citation>
    <scope>NUCLEOTIDE SEQUENCE [LARGE SCALE GENOMIC DNA]</scope>
    <source>
        <strain>03BB102</strain>
    </source>
</reference>